<dbReference type="EC" id="1.2.1.59"/>
<dbReference type="EMBL" id="AJ248284">
    <property type="protein sequence ID" value="CAB49308.1"/>
    <property type="molecule type" value="Genomic_DNA"/>
</dbReference>
<dbReference type="EMBL" id="HE613800">
    <property type="protein sequence ID" value="CCE69764.1"/>
    <property type="molecule type" value="Genomic_DNA"/>
</dbReference>
<dbReference type="PIR" id="E75153">
    <property type="entry name" value="E75153"/>
</dbReference>
<dbReference type="RefSeq" id="WP_010867508.1">
    <property type="nucleotide sequence ID" value="NC_000868.1"/>
</dbReference>
<dbReference type="SMR" id="Q9V1P1"/>
<dbReference type="STRING" id="272844.PAB0257"/>
<dbReference type="KEGG" id="pab:PAB0257"/>
<dbReference type="PATRIC" id="fig|272844.11.peg.407"/>
<dbReference type="eggNOG" id="arCOG00493">
    <property type="taxonomic scope" value="Archaea"/>
</dbReference>
<dbReference type="HOGENOM" id="CLU_069533_0_0_2"/>
<dbReference type="OrthoDB" id="295712at2157"/>
<dbReference type="PhylomeDB" id="Q9V1P1"/>
<dbReference type="UniPathway" id="UPA00109">
    <property type="reaction ID" value="UER00184"/>
</dbReference>
<dbReference type="Proteomes" id="UP000000810">
    <property type="component" value="Chromosome"/>
</dbReference>
<dbReference type="Proteomes" id="UP000009139">
    <property type="component" value="Chromosome"/>
</dbReference>
<dbReference type="GO" id="GO:0005737">
    <property type="term" value="C:cytoplasm"/>
    <property type="evidence" value="ECO:0007669"/>
    <property type="project" value="UniProtKB-SubCell"/>
</dbReference>
<dbReference type="GO" id="GO:0008839">
    <property type="term" value="F:4-hydroxy-tetrahydrodipicolinate reductase"/>
    <property type="evidence" value="ECO:0007669"/>
    <property type="project" value="InterPro"/>
</dbReference>
<dbReference type="GO" id="GO:0004365">
    <property type="term" value="F:glyceraldehyde-3-phosphate dehydrogenase (NAD+) (phosphorylating) activity"/>
    <property type="evidence" value="ECO:0007669"/>
    <property type="project" value="UniProtKB-UniRule"/>
</dbReference>
<dbReference type="GO" id="GO:0047100">
    <property type="term" value="F:glyceraldehyde-3-phosphate dehydrogenase (NADP+) (phosphorylating) activity"/>
    <property type="evidence" value="ECO:0007669"/>
    <property type="project" value="RHEA"/>
</dbReference>
<dbReference type="GO" id="GO:0051287">
    <property type="term" value="F:NAD binding"/>
    <property type="evidence" value="ECO:0007669"/>
    <property type="project" value="InterPro"/>
</dbReference>
<dbReference type="GO" id="GO:0050661">
    <property type="term" value="F:NADP binding"/>
    <property type="evidence" value="ECO:0007669"/>
    <property type="project" value="InterPro"/>
</dbReference>
<dbReference type="GO" id="GO:0006096">
    <property type="term" value="P:glycolytic process"/>
    <property type="evidence" value="ECO:0007669"/>
    <property type="project" value="UniProtKB-UniRule"/>
</dbReference>
<dbReference type="GO" id="GO:0009089">
    <property type="term" value="P:lysine biosynthetic process via diaminopimelate"/>
    <property type="evidence" value="ECO:0007669"/>
    <property type="project" value="InterPro"/>
</dbReference>
<dbReference type="CDD" id="cd18127">
    <property type="entry name" value="GAPDH_II_C"/>
    <property type="match status" value="1"/>
</dbReference>
<dbReference type="CDD" id="cd02278">
    <property type="entry name" value="GAPDH_II_N"/>
    <property type="match status" value="1"/>
</dbReference>
<dbReference type="Gene3D" id="3.30.360.10">
    <property type="entry name" value="Dihydrodipicolinate Reductase, domain 2"/>
    <property type="match status" value="1"/>
</dbReference>
<dbReference type="Gene3D" id="3.40.50.720">
    <property type="entry name" value="NAD(P)-binding Rossmann-like Domain"/>
    <property type="match status" value="1"/>
</dbReference>
<dbReference type="HAMAP" id="MF_00559">
    <property type="entry name" value="G3P_dehdrog_arch"/>
    <property type="match status" value="1"/>
</dbReference>
<dbReference type="InterPro" id="IPR000846">
    <property type="entry name" value="DapB_N"/>
</dbReference>
<dbReference type="InterPro" id="IPR020831">
    <property type="entry name" value="GlycerAld/Erythrose_P_DH"/>
</dbReference>
<dbReference type="InterPro" id="IPR020830">
    <property type="entry name" value="GlycerAld_3-P_DH_AS"/>
</dbReference>
<dbReference type="InterPro" id="IPR020829">
    <property type="entry name" value="GlycerAld_3-P_DH_cat"/>
</dbReference>
<dbReference type="InterPro" id="IPR020828">
    <property type="entry name" value="GlycerAld_3-P_DH_NAD(P)-bd"/>
</dbReference>
<dbReference type="InterPro" id="IPR006436">
    <property type="entry name" value="Glyceraldehyde-3-P_DH_2_arc"/>
</dbReference>
<dbReference type="InterPro" id="IPR036291">
    <property type="entry name" value="NAD(P)-bd_dom_sf"/>
</dbReference>
<dbReference type="NCBIfam" id="TIGR01546">
    <property type="entry name" value="GAPDH-II_archae"/>
    <property type="match status" value="1"/>
</dbReference>
<dbReference type="NCBIfam" id="NF003251">
    <property type="entry name" value="PRK04207.1"/>
    <property type="match status" value="1"/>
</dbReference>
<dbReference type="Pfam" id="PF01113">
    <property type="entry name" value="DapB_N"/>
    <property type="match status" value="1"/>
</dbReference>
<dbReference type="Pfam" id="PF02800">
    <property type="entry name" value="Gp_dh_C"/>
    <property type="match status" value="1"/>
</dbReference>
<dbReference type="PIRSF" id="PIRSF000149">
    <property type="entry name" value="GAP_DH"/>
    <property type="match status" value="1"/>
</dbReference>
<dbReference type="SMART" id="SM00846">
    <property type="entry name" value="Gp_dh_N"/>
    <property type="match status" value="1"/>
</dbReference>
<dbReference type="SUPFAM" id="SSF55347">
    <property type="entry name" value="Glyceraldehyde-3-phosphate dehydrogenase-like, C-terminal domain"/>
    <property type="match status" value="1"/>
</dbReference>
<dbReference type="SUPFAM" id="SSF51735">
    <property type="entry name" value="NAD(P)-binding Rossmann-fold domains"/>
    <property type="match status" value="1"/>
</dbReference>
<dbReference type="PROSITE" id="PS00071">
    <property type="entry name" value="GAPDH"/>
    <property type="match status" value="1"/>
</dbReference>
<keyword id="KW-0963">Cytoplasm</keyword>
<keyword id="KW-0324">Glycolysis</keyword>
<keyword id="KW-0520">NAD</keyword>
<keyword id="KW-0521">NADP</keyword>
<keyword id="KW-0560">Oxidoreductase</keyword>
<protein>
    <recommendedName>
        <fullName>Glyceraldehyde-3-phosphate dehydrogenase</fullName>
        <shortName>GAPDH</shortName>
        <ecNumber>1.2.1.59</ecNumber>
    </recommendedName>
    <alternativeName>
        <fullName>NAD(P)-dependent glyceraldehyde-3-phosphate dehydrogenase</fullName>
    </alternativeName>
</protein>
<evidence type="ECO:0000250" key="1"/>
<evidence type="ECO:0000305" key="2"/>
<proteinExistence type="inferred from homology"/>
<gene>
    <name type="primary">gap</name>
    <name type="ordered locus">PYRAB03860</name>
    <name type="ORF">PAB0257</name>
</gene>
<organism>
    <name type="scientific">Pyrococcus abyssi (strain GE5 / Orsay)</name>
    <dbReference type="NCBI Taxonomy" id="272844"/>
    <lineage>
        <taxon>Archaea</taxon>
        <taxon>Methanobacteriati</taxon>
        <taxon>Methanobacteriota</taxon>
        <taxon>Thermococci</taxon>
        <taxon>Thermococcales</taxon>
        <taxon>Thermococcaceae</taxon>
        <taxon>Pyrococcus</taxon>
    </lineage>
</organism>
<feature type="chain" id="PRO_0000145728" description="Glyceraldehyde-3-phosphate dehydrogenase">
    <location>
        <begin position="1"/>
        <end position="334"/>
    </location>
</feature>
<feature type="active site" description="Nucleophile" evidence="1">
    <location>
        <position position="141"/>
    </location>
</feature>
<feature type="binding site" evidence="1">
    <location>
        <begin position="12"/>
        <end position="13"/>
    </location>
    <ligand>
        <name>NAD(+)</name>
        <dbReference type="ChEBI" id="CHEBI:57540"/>
    </ligand>
</feature>
<feature type="binding site" evidence="1">
    <location>
        <position position="111"/>
    </location>
    <ligand>
        <name>NAD(+)</name>
        <dbReference type="ChEBI" id="CHEBI:57540"/>
    </ligand>
</feature>
<feature type="binding site" evidence="1">
    <location>
        <begin position="140"/>
        <end position="142"/>
    </location>
    <ligand>
        <name>D-glyceraldehyde 3-phosphate</name>
        <dbReference type="ChEBI" id="CHEBI:59776"/>
    </ligand>
</feature>
<feature type="binding site" evidence="1">
    <location>
        <position position="167"/>
    </location>
    <ligand>
        <name>NAD(+)</name>
        <dbReference type="ChEBI" id="CHEBI:57540"/>
    </ligand>
</feature>
<feature type="binding site" evidence="1">
    <location>
        <begin position="192"/>
        <end position="193"/>
    </location>
    <ligand>
        <name>D-glyceraldehyde 3-phosphate</name>
        <dbReference type="ChEBI" id="CHEBI:59776"/>
    </ligand>
</feature>
<feature type="binding site" evidence="1">
    <location>
        <position position="298"/>
    </location>
    <ligand>
        <name>NAD(+)</name>
        <dbReference type="ChEBI" id="CHEBI:57540"/>
    </ligand>
</feature>
<accession>Q9V1P1</accession>
<accession>G8ZI21</accession>
<comment type="catalytic activity">
    <reaction>
        <text>D-glyceraldehyde 3-phosphate + phosphate + NADP(+) = (2R)-3-phospho-glyceroyl phosphate + NADPH + H(+)</text>
        <dbReference type="Rhea" id="RHEA:10296"/>
        <dbReference type="ChEBI" id="CHEBI:15378"/>
        <dbReference type="ChEBI" id="CHEBI:43474"/>
        <dbReference type="ChEBI" id="CHEBI:57604"/>
        <dbReference type="ChEBI" id="CHEBI:57783"/>
        <dbReference type="ChEBI" id="CHEBI:58349"/>
        <dbReference type="ChEBI" id="CHEBI:59776"/>
        <dbReference type="EC" id="1.2.1.59"/>
    </reaction>
</comment>
<comment type="catalytic activity">
    <reaction>
        <text>D-glyceraldehyde 3-phosphate + phosphate + NAD(+) = (2R)-3-phospho-glyceroyl phosphate + NADH + H(+)</text>
        <dbReference type="Rhea" id="RHEA:10300"/>
        <dbReference type="ChEBI" id="CHEBI:15378"/>
        <dbReference type="ChEBI" id="CHEBI:43474"/>
        <dbReference type="ChEBI" id="CHEBI:57540"/>
        <dbReference type="ChEBI" id="CHEBI:57604"/>
        <dbReference type="ChEBI" id="CHEBI:57945"/>
        <dbReference type="ChEBI" id="CHEBI:59776"/>
        <dbReference type="EC" id="1.2.1.59"/>
    </reaction>
</comment>
<comment type="pathway">
    <text>Carbohydrate degradation; glycolysis; pyruvate from D-glyceraldehyde 3-phosphate: step 1/5.</text>
</comment>
<comment type="subunit">
    <text evidence="1">Homotetramer.</text>
</comment>
<comment type="subcellular location">
    <subcellularLocation>
        <location evidence="1">Cytoplasm</location>
    </subcellularLocation>
</comment>
<comment type="similarity">
    <text evidence="2">Belongs to the glyceraldehyde-3-phosphate dehydrogenase family.</text>
</comment>
<reference key="1">
    <citation type="journal article" date="2003" name="Mol. Microbiol.">
        <title>An integrated analysis of the genome of the hyperthermophilic archaeon Pyrococcus abyssi.</title>
        <authorList>
            <person name="Cohen G.N."/>
            <person name="Barbe V."/>
            <person name="Flament D."/>
            <person name="Galperin M."/>
            <person name="Heilig R."/>
            <person name="Lecompte O."/>
            <person name="Poch O."/>
            <person name="Prieur D."/>
            <person name="Querellou J."/>
            <person name="Ripp R."/>
            <person name="Thierry J.-C."/>
            <person name="Van der Oost J."/>
            <person name="Weissenbach J."/>
            <person name="Zivanovic Y."/>
            <person name="Forterre P."/>
        </authorList>
    </citation>
    <scope>NUCLEOTIDE SEQUENCE [LARGE SCALE GENOMIC DNA]</scope>
    <source>
        <strain>GE5 / Orsay</strain>
    </source>
</reference>
<reference key="2">
    <citation type="journal article" date="2012" name="Curr. Microbiol.">
        <title>Re-annotation of two hyperthermophilic archaea Pyrococcus abyssi GE5 and Pyrococcus furiosus DSM 3638.</title>
        <authorList>
            <person name="Gao J."/>
            <person name="Wang J."/>
        </authorList>
    </citation>
    <scope>GENOME REANNOTATION</scope>
    <source>
        <strain>GE5 / Orsay</strain>
    </source>
</reference>
<name>G3P_PYRAB</name>
<sequence>MKVKVGVNGYGTIGKRVAYAITKQDDMELVGVVKTKPDFEAYRAKELGIPVYAANEEFLSRFESVGFEVEGTLNDLLEKVDVIVDATPGGVGAKNKPLYEKAGVKAVFQGGEKANVAEVSFVAQANYEKALGKSYVRVVSCNTTGLVRTLNAIREYADYVYAVMIRRAADPNDIKRGPINAIKPSVEVPSHHGPDVQTVIPINIETMAFVVPTTIMHVHSVMVELKKPLTREDVIDIFENTTRVLLFEKEKGFESTAQIIEFARDLHREWNNLYEIAVWKESINVKGNRLYYIQAVHQESDVVPENVDAIRAMFELADKEESIKKTNKSLGILK</sequence>